<comment type="function">
    <text evidence="1 4">Core subunit of the mitochondrial membrane respiratory chain NADH dehydrogenase (Complex I) that is believed to belong to the minimal assembly required for catalysis. Complex I functions in the transfer of electrons from NADH to the respiratory chain. The immediate electron acceptor for the enzyme is believed to be ubiquinone (By similarity). Essential for N-alkane assimilation.</text>
</comment>
<comment type="catalytic activity">
    <reaction>
        <text>a ubiquinone + NADH + 5 H(+)(in) = a ubiquinol + NAD(+) + 4 H(+)(out)</text>
        <dbReference type="Rhea" id="RHEA:29091"/>
        <dbReference type="Rhea" id="RHEA-COMP:9565"/>
        <dbReference type="Rhea" id="RHEA-COMP:9566"/>
        <dbReference type="ChEBI" id="CHEBI:15378"/>
        <dbReference type="ChEBI" id="CHEBI:16389"/>
        <dbReference type="ChEBI" id="CHEBI:17976"/>
        <dbReference type="ChEBI" id="CHEBI:57540"/>
        <dbReference type="ChEBI" id="CHEBI:57945"/>
        <dbReference type="EC" id="7.1.1.2"/>
    </reaction>
</comment>
<comment type="subunit">
    <text>Complex I is composed of about 30 different subunits. This is a component of the iron-sulfur protein fraction.</text>
</comment>
<comment type="subcellular location">
    <subcellularLocation>
        <location>Mitochondrion inner membrane</location>
    </subcellularLocation>
</comment>
<comment type="similarity">
    <text evidence="5">Belongs to the complex I 30 kDa subunit family.</text>
</comment>
<feature type="transit peptide" description="Mitochondrion" evidence="2">
    <location>
        <begin position="1"/>
        <end status="unknown"/>
    </location>
</feature>
<feature type="chain" id="PRO_0000020001" description="Probable NADH-ubiquinone oxidoreductase 30.4 kDa subunit, mitochondrial">
    <location>
        <begin status="unknown"/>
        <end position="276"/>
    </location>
</feature>
<feature type="region of interest" description="Disordered" evidence="3">
    <location>
        <begin position="248"/>
        <end position="276"/>
    </location>
</feature>
<keyword id="KW-0249">Electron transport</keyword>
<keyword id="KW-0472">Membrane</keyword>
<keyword id="KW-0496">Mitochondrion</keyword>
<keyword id="KW-0999">Mitochondrion inner membrane</keyword>
<keyword id="KW-0520">NAD</keyword>
<keyword id="KW-0560">Oxidoreductase</keyword>
<keyword id="KW-0679">Respiratory chain</keyword>
<keyword id="KW-0809">Transit peptide</keyword>
<keyword id="KW-1278">Translocase</keyword>
<keyword id="KW-0813">Transport</keyword>
<keyword id="KW-0830">Ubiquinone</keyword>
<protein>
    <recommendedName>
        <fullName>Probable NADH-ubiquinone oxidoreductase 30.4 kDa subunit, mitochondrial</fullName>
        <ecNumber>7.1.1.2</ecNumber>
    </recommendedName>
    <alternativeName>
        <fullName>Alkane-inducible protein 1</fullName>
    </alternativeName>
    <alternativeName>
        <fullName>CI-31kD</fullName>
    </alternativeName>
    <alternativeName>
        <fullName>Complex I-30kD</fullName>
    </alternativeName>
</protein>
<reference key="1">
    <citation type="journal article" date="1991" name="Gene">
        <title>Sequences of two tandem genes regulated by carbon sources, one being essential for n-alkane assimilation in Candida maltosa.</title>
        <authorList>
            <person name="Hwang C.W."/>
            <person name="Yano K."/>
            <person name="Takagi M."/>
        </authorList>
    </citation>
    <scope>NUCLEOTIDE SEQUENCE [GENOMIC DNA]</scope>
    <scope>FUNCTION</scope>
    <source>
        <strain>ATCC 28140 / CBS 5611 / IAM 12247 / JCM 1504 / NBRC 1977</strain>
    </source>
</reference>
<dbReference type="EC" id="7.1.1.2"/>
<dbReference type="EMBL" id="M61102">
    <property type="protein sequence ID" value="AAA34360.1"/>
    <property type="molecule type" value="Genomic_DNA"/>
</dbReference>
<dbReference type="PIR" id="JT0591">
    <property type="entry name" value="JT0591"/>
</dbReference>
<dbReference type="SMR" id="Q00673"/>
<dbReference type="GO" id="GO:0005743">
    <property type="term" value="C:mitochondrial inner membrane"/>
    <property type="evidence" value="ECO:0007669"/>
    <property type="project" value="UniProtKB-SubCell"/>
</dbReference>
<dbReference type="GO" id="GO:0008137">
    <property type="term" value="F:NADH dehydrogenase (ubiquinone) activity"/>
    <property type="evidence" value="ECO:0007669"/>
    <property type="project" value="UniProtKB-EC"/>
</dbReference>
<dbReference type="FunFam" id="3.30.460.80:FF:000002">
    <property type="entry name" value="NADH dehydrogenase iron-sulfur protein 3, mitochondrial"/>
    <property type="match status" value="1"/>
</dbReference>
<dbReference type="Gene3D" id="3.30.460.80">
    <property type="entry name" value="NADH:ubiquinone oxidoreductase, 30kDa subunit"/>
    <property type="match status" value="1"/>
</dbReference>
<dbReference type="HAMAP" id="MF_01357">
    <property type="entry name" value="NDH1_NuoC"/>
    <property type="match status" value="1"/>
</dbReference>
<dbReference type="InterPro" id="IPR010218">
    <property type="entry name" value="NADH_DH_suC"/>
</dbReference>
<dbReference type="InterPro" id="IPR037232">
    <property type="entry name" value="NADH_quin_OxRdtase_su_C/D-like"/>
</dbReference>
<dbReference type="InterPro" id="IPR001268">
    <property type="entry name" value="NADH_UbQ_OxRdtase_30kDa_su"/>
</dbReference>
<dbReference type="InterPro" id="IPR020396">
    <property type="entry name" value="NADH_UbQ_OxRdtase_CS"/>
</dbReference>
<dbReference type="NCBIfam" id="TIGR01961">
    <property type="entry name" value="NuoC_fam"/>
    <property type="match status" value="1"/>
</dbReference>
<dbReference type="NCBIfam" id="NF004733">
    <property type="entry name" value="PRK06074.1-5"/>
    <property type="match status" value="1"/>
</dbReference>
<dbReference type="PANTHER" id="PTHR10884:SF14">
    <property type="entry name" value="NADH DEHYDROGENASE [UBIQUINONE] IRON-SULFUR PROTEIN 3, MITOCHONDRIAL"/>
    <property type="match status" value="1"/>
</dbReference>
<dbReference type="PANTHER" id="PTHR10884">
    <property type="entry name" value="NADH DEHYDROGENASE UBIQUINONE IRON-SULFUR PROTEIN 3"/>
    <property type="match status" value="1"/>
</dbReference>
<dbReference type="Pfam" id="PF00329">
    <property type="entry name" value="Complex1_30kDa"/>
    <property type="match status" value="1"/>
</dbReference>
<dbReference type="SUPFAM" id="SSF143243">
    <property type="entry name" value="Nqo5-like"/>
    <property type="match status" value="1"/>
</dbReference>
<dbReference type="PROSITE" id="PS00542">
    <property type="entry name" value="COMPLEX1_30K"/>
    <property type="match status" value="1"/>
</dbReference>
<sequence length="276" mass="32158">MISRTLLKRTVPASRLLRSFTTSNVRLSAHEEDLVNVNNLPRPKPTENYVPLINPTEKYKVQIEELHKFGTYIMSCLPKYIQQFSVWKDELTIYVAPSAIRPVMSYLKNHTSCQFKAVMDITAADYPSRTNRFDVVYNLLSDRHNSRIRVKTYANETSPVPSVTPLFNGANWYERETYDLFGVFFVGHPDLRRIMTDYGFEGHPLRKDFPTTGYTEVRYDEEKKRVIYEPLELTQAWRNFTVGSSVWEPVGEGKDFTPESFKLPTPQPEPEQEEKK</sequence>
<organism>
    <name type="scientific">Candida maltosa</name>
    <name type="common">Yeast</name>
    <dbReference type="NCBI Taxonomy" id="5479"/>
    <lineage>
        <taxon>Eukaryota</taxon>
        <taxon>Fungi</taxon>
        <taxon>Dikarya</taxon>
        <taxon>Ascomycota</taxon>
        <taxon>Saccharomycotina</taxon>
        <taxon>Pichiomycetes</taxon>
        <taxon>Debaryomycetaceae</taxon>
        <taxon>Candida/Lodderomyces clade</taxon>
        <taxon>Candida</taxon>
    </lineage>
</organism>
<proteinExistence type="inferred from homology"/>
<gene>
    <name type="primary">ALI1</name>
</gene>
<evidence type="ECO:0000250" key="1"/>
<evidence type="ECO:0000255" key="2"/>
<evidence type="ECO:0000256" key="3">
    <source>
        <dbReference type="SAM" id="MobiDB-lite"/>
    </source>
</evidence>
<evidence type="ECO:0000269" key="4">
    <source>
    </source>
</evidence>
<evidence type="ECO:0000305" key="5"/>
<name>NDUS3_CANMA</name>
<accession>Q00673</accession>